<protein>
    <recommendedName>
        <fullName evidence="1">Glucose-6-phosphate isomerase 2</fullName>
        <shortName evidence="1">GPI 2</shortName>
        <ecNumber evidence="1">5.3.1.9</ecNumber>
    </recommendedName>
    <alternativeName>
        <fullName evidence="1">Phosphoglucose isomerase 2</fullName>
        <shortName evidence="1">PGI 2</shortName>
    </alternativeName>
    <alternativeName>
        <fullName evidence="1">Phosphohexose isomerase 2</fullName>
        <shortName evidence="1">PHI 2</shortName>
    </alternativeName>
</protein>
<evidence type="ECO:0000255" key="1">
    <source>
        <dbReference type="HAMAP-Rule" id="MF_00473"/>
    </source>
</evidence>
<evidence type="ECO:0000305" key="2"/>
<sequence length="554" mass="61455">MAYYRTPHDVTALPAWQALQKHRDAMQSFSMREAFAADAKRFDQFSLSACGLFLDYSKNLITEQSRDLLVNLANEVGLQDAIKSMFSGEIINASEGRPVLHTALRRPVGDKLSVNGVNVMPEVHKVLNQITELVGRIHDGLWRGYSEKPITDVVNIGIGGSFLGPELVSEALLPYAQRGVRCHYLANIDGSEFHELSANLRAETTLFIVSSKSFNTLETLKNAMAARTWYLAQGGSEAELYRHFIAVSSNKAAAVAFGIREENIFPMWDWVGGRYSLWSAIGLPIALAIGTANFKELLSGAYTMDQHFQTAPFDKNMPVLLALLGVWYGNFWDANSHAILPYDHYLRNITKHLQQLDMESNGKSVLQDGTPVKTDTGPVIWGGVGCNGQHAYHQLLHQGTQLIPADFIVPVVSFNPVADHHQWLYANCLSQSQALMLGKTREEAEAELRAKGLNEADIEKLAPHKVIPGNRPSNTLVVERISPRRLGALVAMYEHKVFVQSVIWGINAFDQWGVELGKELGKGVYQRLVGSLEDSAEDGSTQGLINYFRGRHRG</sequence>
<feature type="chain" id="PRO_0000180712" description="Glucose-6-phosphate isomerase 2">
    <location>
        <begin position="1"/>
        <end position="554"/>
    </location>
</feature>
<feature type="active site" description="Proton donor" evidence="1">
    <location>
        <position position="359"/>
    </location>
</feature>
<feature type="active site" evidence="1">
    <location>
        <position position="390"/>
    </location>
</feature>
<feature type="active site" evidence="1">
    <location>
        <position position="518"/>
    </location>
</feature>
<reference key="1">
    <citation type="journal article" date="2002" name="Environ. Microbiol.">
        <title>Complete genome sequence and comparative analysis of the metabolically versatile Pseudomonas putida KT2440.</title>
        <authorList>
            <person name="Nelson K.E."/>
            <person name="Weinel C."/>
            <person name="Paulsen I.T."/>
            <person name="Dodson R.J."/>
            <person name="Hilbert H."/>
            <person name="Martins dos Santos V.A.P."/>
            <person name="Fouts D.E."/>
            <person name="Gill S.R."/>
            <person name="Pop M."/>
            <person name="Holmes M."/>
            <person name="Brinkac L.M."/>
            <person name="Beanan M.J."/>
            <person name="DeBoy R.T."/>
            <person name="Daugherty S.C."/>
            <person name="Kolonay J.F."/>
            <person name="Madupu R."/>
            <person name="Nelson W.C."/>
            <person name="White O."/>
            <person name="Peterson J.D."/>
            <person name="Khouri H.M."/>
            <person name="Hance I."/>
            <person name="Chris Lee P."/>
            <person name="Holtzapple E.K."/>
            <person name="Scanlan D."/>
            <person name="Tran K."/>
            <person name="Moazzez A."/>
            <person name="Utterback T.R."/>
            <person name="Rizzo M."/>
            <person name="Lee K."/>
            <person name="Kosack D."/>
            <person name="Moestl D."/>
            <person name="Wedler H."/>
            <person name="Lauber J."/>
            <person name="Stjepandic D."/>
            <person name="Hoheisel J."/>
            <person name="Straetz M."/>
            <person name="Heim S."/>
            <person name="Kiewitz C."/>
            <person name="Eisen J.A."/>
            <person name="Timmis K.N."/>
            <person name="Duesterhoeft A."/>
            <person name="Tuemmler B."/>
            <person name="Fraser C.M."/>
        </authorList>
    </citation>
    <scope>NUCLEOTIDE SEQUENCE [LARGE SCALE GENOMIC DNA]</scope>
    <source>
        <strain>ATCC 47054 / DSM 6125 / CFBP 8728 / NCIMB 11950 / KT2440</strain>
    </source>
</reference>
<accession>Q88DW7</accession>
<proteinExistence type="inferred from homology"/>
<comment type="function">
    <text evidence="1">Catalyzes the reversible isomerization of glucose-6-phosphate to fructose-6-phosphate.</text>
</comment>
<comment type="catalytic activity">
    <reaction evidence="1">
        <text>alpha-D-glucose 6-phosphate = beta-D-fructose 6-phosphate</text>
        <dbReference type="Rhea" id="RHEA:11816"/>
        <dbReference type="ChEBI" id="CHEBI:57634"/>
        <dbReference type="ChEBI" id="CHEBI:58225"/>
        <dbReference type="EC" id="5.3.1.9"/>
    </reaction>
</comment>
<comment type="pathway">
    <text evidence="1">Carbohydrate biosynthesis; gluconeogenesis.</text>
</comment>
<comment type="pathway">
    <text evidence="1">Carbohydrate degradation; glycolysis; D-glyceraldehyde 3-phosphate and glycerone phosphate from D-glucose: step 2/4.</text>
</comment>
<comment type="subcellular location">
    <subcellularLocation>
        <location evidence="1">Cytoplasm</location>
    </subcellularLocation>
</comment>
<comment type="similarity">
    <text evidence="1 2">Belongs to the GPI family.</text>
</comment>
<organism>
    <name type="scientific">Pseudomonas putida (strain ATCC 47054 / DSM 6125 / CFBP 8728 / NCIMB 11950 / KT2440)</name>
    <dbReference type="NCBI Taxonomy" id="160488"/>
    <lineage>
        <taxon>Bacteria</taxon>
        <taxon>Pseudomonadati</taxon>
        <taxon>Pseudomonadota</taxon>
        <taxon>Gammaproteobacteria</taxon>
        <taxon>Pseudomonadales</taxon>
        <taxon>Pseudomonadaceae</taxon>
        <taxon>Pseudomonas</taxon>
    </lineage>
</organism>
<dbReference type="EC" id="5.3.1.9" evidence="1"/>
<dbReference type="EMBL" id="AE015451">
    <property type="protein sequence ID" value="AAN70274.1"/>
    <property type="molecule type" value="Genomic_DNA"/>
</dbReference>
<dbReference type="RefSeq" id="NP_746810.1">
    <property type="nucleotide sequence ID" value="NC_002947.4"/>
</dbReference>
<dbReference type="SMR" id="Q88DW7"/>
<dbReference type="STRING" id="160488.PP_4701"/>
<dbReference type="PaxDb" id="160488-PP_4701"/>
<dbReference type="KEGG" id="ppu:PP_4701"/>
<dbReference type="PATRIC" id="fig|160488.4.peg.5011"/>
<dbReference type="eggNOG" id="COG0166">
    <property type="taxonomic scope" value="Bacteria"/>
</dbReference>
<dbReference type="HOGENOM" id="CLU_017947_3_1_6"/>
<dbReference type="OrthoDB" id="140919at2"/>
<dbReference type="PhylomeDB" id="Q88DW7"/>
<dbReference type="BioCyc" id="PPUT160488:G1G01-5022-MONOMER"/>
<dbReference type="UniPathway" id="UPA00109">
    <property type="reaction ID" value="UER00181"/>
</dbReference>
<dbReference type="UniPathway" id="UPA00138"/>
<dbReference type="Proteomes" id="UP000000556">
    <property type="component" value="Chromosome"/>
</dbReference>
<dbReference type="GO" id="GO:0005829">
    <property type="term" value="C:cytosol"/>
    <property type="evidence" value="ECO:0007669"/>
    <property type="project" value="TreeGrafter"/>
</dbReference>
<dbReference type="GO" id="GO:0097367">
    <property type="term" value="F:carbohydrate derivative binding"/>
    <property type="evidence" value="ECO:0007669"/>
    <property type="project" value="InterPro"/>
</dbReference>
<dbReference type="GO" id="GO:0004347">
    <property type="term" value="F:glucose-6-phosphate isomerase activity"/>
    <property type="evidence" value="ECO:0007669"/>
    <property type="project" value="UniProtKB-UniRule"/>
</dbReference>
<dbReference type="GO" id="GO:0048029">
    <property type="term" value="F:monosaccharide binding"/>
    <property type="evidence" value="ECO:0007669"/>
    <property type="project" value="TreeGrafter"/>
</dbReference>
<dbReference type="GO" id="GO:0006094">
    <property type="term" value="P:gluconeogenesis"/>
    <property type="evidence" value="ECO:0007669"/>
    <property type="project" value="UniProtKB-UniRule"/>
</dbReference>
<dbReference type="GO" id="GO:0051156">
    <property type="term" value="P:glucose 6-phosphate metabolic process"/>
    <property type="evidence" value="ECO:0007669"/>
    <property type="project" value="TreeGrafter"/>
</dbReference>
<dbReference type="GO" id="GO:0006096">
    <property type="term" value="P:glycolytic process"/>
    <property type="evidence" value="ECO:0007669"/>
    <property type="project" value="UniProtKB-UniRule"/>
</dbReference>
<dbReference type="CDD" id="cd05015">
    <property type="entry name" value="SIS_PGI_1"/>
    <property type="match status" value="1"/>
</dbReference>
<dbReference type="CDD" id="cd05016">
    <property type="entry name" value="SIS_PGI_2"/>
    <property type="match status" value="1"/>
</dbReference>
<dbReference type="FunFam" id="3.40.50.10490:FF:000018">
    <property type="entry name" value="Glucose-6-phosphate isomerase"/>
    <property type="match status" value="1"/>
</dbReference>
<dbReference type="Gene3D" id="1.10.1390.10">
    <property type="match status" value="1"/>
</dbReference>
<dbReference type="Gene3D" id="3.40.50.10490">
    <property type="entry name" value="Glucose-6-phosphate isomerase like protein, domain 1"/>
    <property type="match status" value="2"/>
</dbReference>
<dbReference type="HAMAP" id="MF_00473">
    <property type="entry name" value="G6P_isomerase"/>
    <property type="match status" value="1"/>
</dbReference>
<dbReference type="InterPro" id="IPR001672">
    <property type="entry name" value="G6P_Isomerase"/>
</dbReference>
<dbReference type="InterPro" id="IPR023096">
    <property type="entry name" value="G6P_Isomerase_C"/>
</dbReference>
<dbReference type="InterPro" id="IPR018189">
    <property type="entry name" value="Phosphoglucose_isomerase_CS"/>
</dbReference>
<dbReference type="InterPro" id="IPR046348">
    <property type="entry name" value="SIS_dom_sf"/>
</dbReference>
<dbReference type="InterPro" id="IPR035476">
    <property type="entry name" value="SIS_PGI_1"/>
</dbReference>
<dbReference type="InterPro" id="IPR035482">
    <property type="entry name" value="SIS_PGI_2"/>
</dbReference>
<dbReference type="NCBIfam" id="NF001211">
    <property type="entry name" value="PRK00179.1"/>
    <property type="match status" value="1"/>
</dbReference>
<dbReference type="PANTHER" id="PTHR11469">
    <property type="entry name" value="GLUCOSE-6-PHOSPHATE ISOMERASE"/>
    <property type="match status" value="1"/>
</dbReference>
<dbReference type="PANTHER" id="PTHR11469:SF1">
    <property type="entry name" value="GLUCOSE-6-PHOSPHATE ISOMERASE"/>
    <property type="match status" value="1"/>
</dbReference>
<dbReference type="Pfam" id="PF00342">
    <property type="entry name" value="PGI"/>
    <property type="match status" value="1"/>
</dbReference>
<dbReference type="PRINTS" id="PR00662">
    <property type="entry name" value="G6PISOMERASE"/>
</dbReference>
<dbReference type="SUPFAM" id="SSF53697">
    <property type="entry name" value="SIS domain"/>
    <property type="match status" value="1"/>
</dbReference>
<dbReference type="PROSITE" id="PS00765">
    <property type="entry name" value="P_GLUCOSE_ISOMERASE_1"/>
    <property type="match status" value="1"/>
</dbReference>
<dbReference type="PROSITE" id="PS00174">
    <property type="entry name" value="P_GLUCOSE_ISOMERASE_2"/>
    <property type="match status" value="1"/>
</dbReference>
<dbReference type="PROSITE" id="PS51463">
    <property type="entry name" value="P_GLUCOSE_ISOMERASE_3"/>
    <property type="match status" value="1"/>
</dbReference>
<name>G6PI2_PSEPK</name>
<gene>
    <name evidence="1" type="primary">pgi2</name>
    <name type="synonym">pgi-2</name>
    <name type="ordered locus">PP_4701</name>
</gene>
<keyword id="KW-0963">Cytoplasm</keyword>
<keyword id="KW-0312">Gluconeogenesis</keyword>
<keyword id="KW-0324">Glycolysis</keyword>
<keyword id="KW-0413">Isomerase</keyword>
<keyword id="KW-1185">Reference proteome</keyword>